<organism>
    <name type="scientific">Pelagibacter ubique (strain HTCC1062)</name>
    <dbReference type="NCBI Taxonomy" id="335992"/>
    <lineage>
        <taxon>Bacteria</taxon>
        <taxon>Pseudomonadati</taxon>
        <taxon>Pseudomonadota</taxon>
        <taxon>Alphaproteobacteria</taxon>
        <taxon>Candidatus Pelagibacterales</taxon>
        <taxon>Candidatus Pelagibacteraceae</taxon>
        <taxon>Candidatus Pelagibacter</taxon>
    </lineage>
</organism>
<reference key="1">
    <citation type="journal article" date="2005" name="Science">
        <title>Genome streamlining in a cosmopolitan oceanic bacterium.</title>
        <authorList>
            <person name="Giovannoni S.J."/>
            <person name="Tripp H.J."/>
            <person name="Givan S."/>
            <person name="Podar M."/>
            <person name="Vergin K.L."/>
            <person name="Baptista D."/>
            <person name="Bibbs L."/>
            <person name="Eads J."/>
            <person name="Richardson T.H."/>
            <person name="Noordewier M."/>
            <person name="Rappe M.S."/>
            <person name="Short J.M."/>
            <person name="Carrington J.C."/>
            <person name="Mathur E.J."/>
        </authorList>
    </citation>
    <scope>NUCLEOTIDE SEQUENCE [LARGE SCALE GENOMIC DNA]</scope>
    <source>
        <strain>HTCC1062</strain>
    </source>
</reference>
<protein>
    <recommendedName>
        <fullName evidence="1">Small ribosomal subunit protein uS5</fullName>
    </recommendedName>
    <alternativeName>
        <fullName evidence="2">30S ribosomal protein S5</fullName>
    </alternativeName>
</protein>
<feature type="chain" id="PRO_0000230354" description="Small ribosomal subunit protein uS5">
    <location>
        <begin position="1"/>
        <end position="170"/>
    </location>
</feature>
<feature type="domain" description="S5 DRBM" evidence="1">
    <location>
        <begin position="11"/>
        <end position="74"/>
    </location>
</feature>
<proteinExistence type="inferred from homology"/>
<keyword id="KW-1185">Reference proteome</keyword>
<keyword id="KW-0687">Ribonucleoprotein</keyword>
<keyword id="KW-0689">Ribosomal protein</keyword>
<keyword id="KW-0694">RNA-binding</keyword>
<keyword id="KW-0699">rRNA-binding</keyword>
<name>RS5_PELUB</name>
<dbReference type="EMBL" id="CP000084">
    <property type="protein sequence ID" value="AAZ21903.1"/>
    <property type="molecule type" value="Genomic_DNA"/>
</dbReference>
<dbReference type="RefSeq" id="WP_006996828.1">
    <property type="nucleotide sequence ID" value="NC_007205.1"/>
</dbReference>
<dbReference type="SMR" id="Q4FLN5"/>
<dbReference type="STRING" id="335992.SAR11_1100"/>
<dbReference type="GeneID" id="66295589"/>
<dbReference type="KEGG" id="pub:SAR11_1100"/>
<dbReference type="eggNOG" id="COG0098">
    <property type="taxonomic scope" value="Bacteria"/>
</dbReference>
<dbReference type="HOGENOM" id="CLU_065898_2_2_5"/>
<dbReference type="OrthoDB" id="9809045at2"/>
<dbReference type="Proteomes" id="UP000002528">
    <property type="component" value="Chromosome"/>
</dbReference>
<dbReference type="GO" id="GO:0015935">
    <property type="term" value="C:small ribosomal subunit"/>
    <property type="evidence" value="ECO:0007669"/>
    <property type="project" value="InterPro"/>
</dbReference>
<dbReference type="GO" id="GO:0019843">
    <property type="term" value="F:rRNA binding"/>
    <property type="evidence" value="ECO:0007669"/>
    <property type="project" value="UniProtKB-UniRule"/>
</dbReference>
<dbReference type="GO" id="GO:0003735">
    <property type="term" value="F:structural constituent of ribosome"/>
    <property type="evidence" value="ECO:0007669"/>
    <property type="project" value="InterPro"/>
</dbReference>
<dbReference type="GO" id="GO:0006412">
    <property type="term" value="P:translation"/>
    <property type="evidence" value="ECO:0007669"/>
    <property type="project" value="UniProtKB-UniRule"/>
</dbReference>
<dbReference type="FunFam" id="3.30.160.20:FF:000001">
    <property type="entry name" value="30S ribosomal protein S5"/>
    <property type="match status" value="1"/>
</dbReference>
<dbReference type="FunFam" id="3.30.230.10:FF:000002">
    <property type="entry name" value="30S ribosomal protein S5"/>
    <property type="match status" value="1"/>
</dbReference>
<dbReference type="Gene3D" id="3.30.160.20">
    <property type="match status" value="1"/>
</dbReference>
<dbReference type="Gene3D" id="3.30.230.10">
    <property type="match status" value="1"/>
</dbReference>
<dbReference type="HAMAP" id="MF_01307_B">
    <property type="entry name" value="Ribosomal_uS5_B"/>
    <property type="match status" value="1"/>
</dbReference>
<dbReference type="InterPro" id="IPR020568">
    <property type="entry name" value="Ribosomal_Su5_D2-typ_SF"/>
</dbReference>
<dbReference type="InterPro" id="IPR000851">
    <property type="entry name" value="Ribosomal_uS5"/>
</dbReference>
<dbReference type="InterPro" id="IPR005712">
    <property type="entry name" value="Ribosomal_uS5_bac-type"/>
</dbReference>
<dbReference type="InterPro" id="IPR005324">
    <property type="entry name" value="Ribosomal_uS5_C"/>
</dbReference>
<dbReference type="InterPro" id="IPR013810">
    <property type="entry name" value="Ribosomal_uS5_N"/>
</dbReference>
<dbReference type="InterPro" id="IPR018192">
    <property type="entry name" value="Ribosomal_uS5_N_CS"/>
</dbReference>
<dbReference type="InterPro" id="IPR014721">
    <property type="entry name" value="Ribsml_uS5_D2-typ_fold_subgr"/>
</dbReference>
<dbReference type="NCBIfam" id="TIGR01021">
    <property type="entry name" value="rpsE_bact"/>
    <property type="match status" value="1"/>
</dbReference>
<dbReference type="PANTHER" id="PTHR48277">
    <property type="entry name" value="MITOCHONDRIAL RIBOSOMAL PROTEIN S5"/>
    <property type="match status" value="1"/>
</dbReference>
<dbReference type="PANTHER" id="PTHR48277:SF1">
    <property type="entry name" value="MITOCHONDRIAL RIBOSOMAL PROTEIN S5"/>
    <property type="match status" value="1"/>
</dbReference>
<dbReference type="Pfam" id="PF00333">
    <property type="entry name" value="Ribosomal_S5"/>
    <property type="match status" value="1"/>
</dbReference>
<dbReference type="Pfam" id="PF03719">
    <property type="entry name" value="Ribosomal_S5_C"/>
    <property type="match status" value="1"/>
</dbReference>
<dbReference type="SUPFAM" id="SSF54768">
    <property type="entry name" value="dsRNA-binding domain-like"/>
    <property type="match status" value="1"/>
</dbReference>
<dbReference type="SUPFAM" id="SSF54211">
    <property type="entry name" value="Ribosomal protein S5 domain 2-like"/>
    <property type="match status" value="1"/>
</dbReference>
<dbReference type="PROSITE" id="PS00585">
    <property type="entry name" value="RIBOSOMAL_S5"/>
    <property type="match status" value="1"/>
</dbReference>
<dbReference type="PROSITE" id="PS50881">
    <property type="entry name" value="S5_DSRBD"/>
    <property type="match status" value="1"/>
</dbReference>
<comment type="function">
    <text evidence="1">With S4 and S12 plays an important role in translational accuracy.</text>
</comment>
<comment type="function">
    <text evidence="1">Located at the back of the 30S subunit body where it stabilizes the conformation of the head with respect to the body.</text>
</comment>
<comment type="subunit">
    <text evidence="1">Part of the 30S ribosomal subunit. Contacts proteins S4 and S8.</text>
</comment>
<comment type="domain">
    <text>The N-terminal domain interacts with the head of the 30S subunit; the C-terminal domain interacts with the body and contacts protein S4. The interaction surface between S4 and S5 is involved in control of translational fidelity.</text>
</comment>
<comment type="similarity">
    <text evidence="1">Belongs to the universal ribosomal protein uS5 family.</text>
</comment>
<sequence>MDFKDKKDDGILEKLVHINRITKVVKGGRRFGFSALVVVGNQAGKIGVAHAKAKQVPDAIKKANETARRVLIHVPLREGRTIHHDVYGKDGAGKIILRSAPKGTGIIAGGPVRAVCEVLGIKDIVAKSMGTSNPHNMIRATMKALSKQNSPKHIATIRNKKISDVIEKRG</sequence>
<evidence type="ECO:0000255" key="1">
    <source>
        <dbReference type="HAMAP-Rule" id="MF_01307"/>
    </source>
</evidence>
<evidence type="ECO:0000305" key="2"/>
<gene>
    <name evidence="1" type="primary">rpsE</name>
    <name type="ordered locus">SAR11_1100</name>
</gene>
<accession>Q4FLN5</accession>